<name>TMC_TERAN</name>
<dbReference type="GO" id="GO:0005576">
    <property type="term" value="C:extracellular region"/>
    <property type="evidence" value="ECO:0007669"/>
    <property type="project" value="UniProtKB-SubCell"/>
</dbReference>
<dbReference type="GO" id="GO:0090729">
    <property type="term" value="F:toxin activity"/>
    <property type="evidence" value="ECO:0007669"/>
    <property type="project" value="UniProtKB-KW"/>
</dbReference>
<comment type="subcellular location">
    <subcellularLocation>
        <location evidence="3">Secreted</location>
    </subcellularLocation>
</comment>
<comment type="tissue specificity">
    <text evidence="3">Expressed by the venom duct.</text>
</comment>
<comment type="domain">
    <text>The cysteine framework is XXII (C-C-C-C-C-C-C-C).</text>
</comment>
<comment type="PTM">
    <text evidence="2">Contains 4 disulfide bonds.</text>
</comment>
<comment type="similarity">
    <text>Belongs to the teretoxin C (TC) superfamily.</text>
</comment>
<organism>
    <name type="scientific">Terebra anilis</name>
    <name type="common">Auger snail</name>
    <name type="synonym">Cinguloterebra anilis</name>
    <dbReference type="NCBI Taxonomy" id="553697"/>
    <lineage>
        <taxon>Eukaryota</taxon>
        <taxon>Metazoa</taxon>
        <taxon>Spiralia</taxon>
        <taxon>Lophotrochozoa</taxon>
        <taxon>Mollusca</taxon>
        <taxon>Gastropoda</taxon>
        <taxon>Caenogastropoda</taxon>
        <taxon>Neogastropoda</taxon>
        <taxon>Conoidea</taxon>
        <taxon>Terebridae</taxon>
        <taxon>Terebra</taxon>
    </lineage>
</organism>
<reference key="1">
    <citation type="journal article" date="2015" name="Genome Biol. Evol.">
        <title>Molecular diversity and gene evolution of the venom arsenal of Terebridae predatory marine snails.</title>
        <authorList>
            <person name="Gorson J."/>
            <person name="Ramrattan G."/>
            <person name="Verdes A."/>
            <person name="Wright E.M."/>
            <person name="Kantor Y."/>
            <person name="Rajaram Srinivasan R."/>
            <person name="Musunuri R."/>
            <person name="Packer D."/>
            <person name="Albano G."/>
            <person name="Qiu W.G."/>
            <person name="Holford M."/>
        </authorList>
    </citation>
    <scope>NUCLEOTIDE SEQUENCE [MRNA]</scope>
    <source>
        <tissue>Venom duct</tissue>
    </source>
</reference>
<proteinExistence type="inferred from homology"/>
<accession>P0DN63</accession>
<keyword id="KW-0165">Cleavage on pair of basic residues</keyword>
<keyword id="KW-1015">Disulfide bond</keyword>
<keyword id="KW-0964">Secreted</keyword>
<keyword id="KW-0732">Signal</keyword>
<keyword id="KW-0800">Toxin</keyword>
<sequence length="89" mass="10121">MKVLFTLAMIVVTLCLGQRMRRDIIDDVCNTCEMSCQWVIANNGTTVCRIPECDTIAAFCKSLKFNMSECMEDDSFIQDHCIRAFLLAD</sequence>
<feature type="signal peptide" evidence="2">
    <location>
        <begin position="1"/>
        <end position="22"/>
    </location>
</feature>
<feature type="chain" id="PRO_0000435093" description="Teretoxin Tan22.12">
    <location>
        <begin position="23"/>
        <end position="89"/>
    </location>
</feature>
<protein>
    <recommendedName>
        <fullName evidence="1">Teretoxin Tan22.12</fullName>
    </recommendedName>
</protein>
<evidence type="ECO:0000303" key="1">
    <source>
    </source>
</evidence>
<evidence type="ECO:0000305" key="2"/>
<evidence type="ECO:0000305" key="3">
    <source>
    </source>
</evidence>